<organismHost>
    <name type="scientific">Pisum sativum</name>
    <name type="common">Garden pea</name>
    <name type="synonym">Lathyrus oleraceus</name>
    <dbReference type="NCBI Taxonomy" id="3888"/>
</organismHost>
<name>POLG_PSBMV</name>
<feature type="chain" id="PRO_0000420013" description="Genome polyprotein">
    <location>
        <begin position="1"/>
        <end position="3206"/>
    </location>
</feature>
<feature type="chain" id="PRO_0000040375" description="P1 proteinase" evidence="6">
    <location>
        <begin position="1"/>
        <end position="397"/>
    </location>
</feature>
<feature type="chain" id="PRO_0000040376" description="Helper component proteinase" evidence="6">
    <location>
        <begin position="398"/>
        <end position="856"/>
    </location>
</feature>
<feature type="chain" id="PRO_0000040377" description="Protein P3" evidence="1">
    <location>
        <begin position="857"/>
        <end position="1214"/>
    </location>
</feature>
<feature type="chain" id="PRO_0000040378" description="6 kDa protein 1" evidence="1">
    <location>
        <begin position="1215"/>
        <end position="1266"/>
    </location>
</feature>
<feature type="chain" id="PRO_0000040379" description="Cytoplasmic inclusion protein" evidence="1">
    <location>
        <begin position="1267"/>
        <end position="1902"/>
    </location>
</feature>
<feature type="chain" id="PRO_0000040380" description="6 kDa protein 2" evidence="1">
    <location>
        <begin position="1903"/>
        <end position="1955"/>
    </location>
</feature>
<feature type="chain" id="PRO_0000040381" description="Viral genome-linked protein" evidence="1">
    <location>
        <begin position="1956"/>
        <end position="2149"/>
    </location>
</feature>
<feature type="chain" id="PRO_0000040382" description="Nuclear inclusion protein A" evidence="1">
    <location>
        <begin position="2150"/>
        <end position="2395"/>
    </location>
</feature>
<feature type="chain" id="PRO_0000040383" description="Nuclear inclusion protein B" evidence="1">
    <location>
        <begin position="2396"/>
        <end position="2915"/>
    </location>
</feature>
<feature type="chain" id="PRO_0000040384" description="Capsid protein" evidence="1">
    <location>
        <begin position="2916"/>
        <end position="3206"/>
    </location>
</feature>
<feature type="domain" description="Peptidase S30" evidence="12">
    <location>
        <begin position="255"/>
        <end position="397"/>
    </location>
</feature>
<feature type="domain" description="Peptidase C6" evidence="11">
    <location>
        <begin position="734"/>
        <end position="856"/>
    </location>
</feature>
<feature type="domain" description="Helicase ATP-binding" evidence="8">
    <location>
        <begin position="1338"/>
        <end position="1490"/>
    </location>
</feature>
<feature type="domain" description="Helicase C-terminal" evidence="9">
    <location>
        <begin position="1494"/>
        <end position="1668"/>
    </location>
</feature>
<feature type="domain" description="Peptidase C4" evidence="10">
    <location>
        <begin position="2150"/>
        <end position="2368"/>
    </location>
</feature>
<feature type="domain" description="RdRp catalytic" evidence="7">
    <location>
        <begin position="2637"/>
        <end position="2761"/>
    </location>
</feature>
<feature type="region of interest" description="Disordered" evidence="13">
    <location>
        <begin position="2900"/>
        <end position="2979"/>
    </location>
</feature>
<feature type="short sequence motif" description="Involved in interaction with stylet and aphid transmission" evidence="1">
    <location>
        <begin position="450"/>
        <end position="453"/>
    </location>
</feature>
<feature type="short sequence motif" description="Involved in virions binding and aphid transmission" evidence="1">
    <location>
        <begin position="708"/>
        <end position="710"/>
    </location>
</feature>
<feature type="short sequence motif" description="DECH box">
    <location>
        <begin position="1440"/>
        <end position="1443"/>
    </location>
</feature>
<feature type="short sequence motif" description="Nuclear localization signal" evidence="6">
    <location>
        <begin position="1994"/>
        <end position="2001"/>
    </location>
</feature>
<feature type="compositionally biased region" description="Basic and acidic residues" evidence="13">
    <location>
        <begin position="2916"/>
        <end position="2939"/>
    </location>
</feature>
<feature type="compositionally biased region" description="Basic and acidic residues" evidence="13">
    <location>
        <begin position="2949"/>
        <end position="2974"/>
    </location>
</feature>
<feature type="active site" description="For P1 proteinase activity" evidence="12">
    <location>
        <position position="307"/>
    </location>
</feature>
<feature type="active site" description="For P1 proteinase activity" evidence="12">
    <location>
        <position position="316"/>
    </location>
</feature>
<feature type="active site" description="For P1 proteinase activity" evidence="12">
    <location>
        <position position="348"/>
    </location>
</feature>
<feature type="active site" description="For helper component proteinase activity" evidence="11">
    <location>
        <position position="742"/>
    </location>
</feature>
<feature type="active site" description="For helper component proteinase activity" evidence="11">
    <location>
        <position position="815"/>
    </location>
</feature>
<feature type="active site" description="For nuclear inclusion protein A activity" evidence="10">
    <location>
        <position position="2195"/>
    </location>
</feature>
<feature type="active site" description="For nuclear inclusion protein A activity" evidence="10">
    <location>
        <position position="2230"/>
    </location>
</feature>
<feature type="active site" description="For nuclear inclusion protein A activity" evidence="10">
    <location>
        <position position="2300"/>
    </location>
</feature>
<feature type="binding site" evidence="8">
    <location>
        <begin position="1351"/>
        <end position="1358"/>
    </location>
    <ligand>
        <name>ATP</name>
        <dbReference type="ChEBI" id="CHEBI:30616"/>
    </ligand>
</feature>
<feature type="site" description="Cleavage; by P1 proteinase" evidence="12">
    <location>
        <begin position="397"/>
        <end position="398"/>
    </location>
</feature>
<feature type="site" description="Cleavage; by autolysis" evidence="11">
    <location>
        <begin position="856"/>
        <end position="857"/>
    </location>
</feature>
<feature type="site" description="Cleavage; by NIa-pro" evidence="1">
    <location>
        <begin position="1214"/>
        <end position="1215"/>
    </location>
</feature>
<feature type="site" description="Cleavage; by NIa-pro" evidence="1">
    <location>
        <begin position="1266"/>
        <end position="1267"/>
    </location>
</feature>
<feature type="site" description="Cleavage; by NIa-pro" evidence="1">
    <location>
        <begin position="1902"/>
        <end position="1903"/>
    </location>
</feature>
<feature type="site" description="Cleavage; by NIa-pro" evidence="1">
    <location>
        <begin position="1955"/>
        <end position="1956"/>
    </location>
</feature>
<feature type="site" description="Cleavage; by NIa-pro" evidence="1">
    <location>
        <begin position="2149"/>
        <end position="2150"/>
    </location>
</feature>
<feature type="site" description="Cleavage; by NIa-pro" evidence="1">
    <location>
        <begin position="2395"/>
        <end position="2396"/>
    </location>
</feature>
<feature type="site" description="Cleavage; by NIa-pro" evidence="1">
    <location>
        <begin position="2915"/>
        <end position="2916"/>
    </location>
</feature>
<feature type="modified residue" description="O-(5'-phospho-RNA)-tyrosine" evidence="3">
    <location>
        <position position="2016"/>
    </location>
</feature>
<reference key="1">
    <citation type="journal article" date="1991" name="J. Gen. Virol.">
        <title>The complete nucleotide sequence of pea seed-borne mosaic virus RNA.</title>
        <authorList>
            <person name="Johansen E."/>
            <person name="Rasmussen O.F."/>
            <person name="Heide M."/>
            <person name="Borkhardt B."/>
        </authorList>
    </citation>
    <scope>NUCLEOTIDE SEQUENCE [MRNA]</scope>
</reference>
<reference key="2">
    <citation type="journal article" date="2001" name="Virus Res.">
        <title>Potyvirus proteins: a wealth of functions.</title>
        <authorList>
            <person name="Urcuqui-Inchima S."/>
            <person name="Haenni A.L."/>
            <person name="Bernardi F."/>
        </authorList>
    </citation>
    <scope>REVIEW</scope>
</reference>
<reference key="3">
    <citation type="journal article" date="2011" name="PLoS ONE">
        <title>Structure-based mutational analysis of eIF4E in relation to sbm1 resistance to pea seed-borne mosaic virus in pea.</title>
        <authorList>
            <person name="Ashby J.A."/>
            <person name="Stevenson C.E.M."/>
            <person name="Jarvis G.E."/>
            <person name="Lawson D.M."/>
            <person name="Maule A.J."/>
        </authorList>
    </citation>
    <scope>INTERACTION WITH HOST EIF4E (VIRAL GENOME-LINKED PROTEIN)</scope>
    <scope>SUBCELLULAR LOCATION (VIRAL GENOME-LINKED PROTEIN)</scope>
</reference>
<dbReference type="EC" id="3.4.-.-" evidence="2"/>
<dbReference type="EC" id="3.4.22.45" evidence="2"/>
<dbReference type="EC" id="3.6.4.-"/>
<dbReference type="EC" id="3.4.22.44"/>
<dbReference type="EC" id="2.7.7.48"/>
<dbReference type="EMBL" id="D10930">
    <property type="protein sequence ID" value="BAA01726.1"/>
    <property type="molecule type" value="mRNA"/>
</dbReference>
<dbReference type="PIR" id="JQ1331">
    <property type="entry name" value="GNVSPV"/>
</dbReference>
<dbReference type="RefSeq" id="NP_056765.1">
    <property type="nucleotide sequence ID" value="NC_001671.1"/>
</dbReference>
<dbReference type="MEROPS" id="C04.010"/>
<dbReference type="GeneID" id="1494045"/>
<dbReference type="KEGG" id="vg:1494045"/>
<dbReference type="Proteomes" id="UP000006689">
    <property type="component" value="Segment"/>
</dbReference>
<dbReference type="GO" id="GO:0019029">
    <property type="term" value="C:helical viral capsid"/>
    <property type="evidence" value="ECO:0007669"/>
    <property type="project" value="UniProtKB-KW"/>
</dbReference>
<dbReference type="GO" id="GO:0044161">
    <property type="term" value="C:host cell cytoplasmic vesicle"/>
    <property type="evidence" value="ECO:0007669"/>
    <property type="project" value="UniProtKB-SubCell"/>
</dbReference>
<dbReference type="GO" id="GO:0042025">
    <property type="term" value="C:host cell nucleus"/>
    <property type="evidence" value="ECO:0007669"/>
    <property type="project" value="UniProtKB-SubCell"/>
</dbReference>
<dbReference type="GO" id="GO:0005524">
    <property type="term" value="F:ATP binding"/>
    <property type="evidence" value="ECO:0007669"/>
    <property type="project" value="UniProtKB-KW"/>
</dbReference>
<dbReference type="GO" id="GO:0004197">
    <property type="term" value="F:cysteine-type endopeptidase activity"/>
    <property type="evidence" value="ECO:0007669"/>
    <property type="project" value="InterPro"/>
</dbReference>
<dbReference type="GO" id="GO:0004386">
    <property type="term" value="F:helicase activity"/>
    <property type="evidence" value="ECO:0007669"/>
    <property type="project" value="UniProtKB-KW"/>
</dbReference>
<dbReference type="GO" id="GO:0016818">
    <property type="term" value="F:hydrolase activity, acting on acid anhydrides, in phosphorus-containing anhydrides"/>
    <property type="evidence" value="ECO:0007669"/>
    <property type="project" value="InterPro"/>
</dbReference>
<dbReference type="GO" id="GO:0003723">
    <property type="term" value="F:RNA binding"/>
    <property type="evidence" value="ECO:0007669"/>
    <property type="project" value="InterPro"/>
</dbReference>
<dbReference type="GO" id="GO:0003968">
    <property type="term" value="F:RNA-directed RNA polymerase activity"/>
    <property type="evidence" value="ECO:0007669"/>
    <property type="project" value="UniProtKB-KW"/>
</dbReference>
<dbReference type="GO" id="GO:0008236">
    <property type="term" value="F:serine-type peptidase activity"/>
    <property type="evidence" value="ECO:0007669"/>
    <property type="project" value="UniProtKB-KW"/>
</dbReference>
<dbReference type="GO" id="GO:0005198">
    <property type="term" value="F:structural molecule activity"/>
    <property type="evidence" value="ECO:0007669"/>
    <property type="project" value="InterPro"/>
</dbReference>
<dbReference type="GO" id="GO:0006351">
    <property type="term" value="P:DNA-templated transcription"/>
    <property type="evidence" value="ECO:0007669"/>
    <property type="project" value="InterPro"/>
</dbReference>
<dbReference type="GO" id="GO:0006508">
    <property type="term" value="P:proteolysis"/>
    <property type="evidence" value="ECO:0007669"/>
    <property type="project" value="UniProtKB-KW"/>
</dbReference>
<dbReference type="GO" id="GO:0052170">
    <property type="term" value="P:symbiont-mediated suppression of host innate immune response"/>
    <property type="evidence" value="ECO:0007669"/>
    <property type="project" value="UniProtKB-KW"/>
</dbReference>
<dbReference type="GO" id="GO:0039694">
    <property type="term" value="P:viral RNA genome replication"/>
    <property type="evidence" value="ECO:0007669"/>
    <property type="project" value="InterPro"/>
</dbReference>
<dbReference type="GO" id="GO:0075523">
    <property type="term" value="P:viral translational frameshifting"/>
    <property type="evidence" value="ECO:0007669"/>
    <property type="project" value="UniProtKB-KW"/>
</dbReference>
<dbReference type="CDD" id="cd23175">
    <property type="entry name" value="ps-ssRNAv_Potyviridae_RdRp"/>
    <property type="match status" value="1"/>
</dbReference>
<dbReference type="Gene3D" id="3.30.70.270">
    <property type="match status" value="1"/>
</dbReference>
<dbReference type="Gene3D" id="3.90.70.150">
    <property type="entry name" value="Helper component proteinase"/>
    <property type="match status" value="1"/>
</dbReference>
<dbReference type="Gene3D" id="3.40.50.300">
    <property type="entry name" value="P-loop containing nucleotide triphosphate hydrolases"/>
    <property type="match status" value="2"/>
</dbReference>
<dbReference type="Gene3D" id="2.40.10.10">
    <property type="entry name" value="Trypsin-like serine proteases"/>
    <property type="match status" value="2"/>
</dbReference>
<dbReference type="InterPro" id="IPR011545">
    <property type="entry name" value="DEAD/DEAH_box_helicase_dom"/>
</dbReference>
<dbReference type="InterPro" id="IPR043502">
    <property type="entry name" value="DNA/RNA_pol_sf"/>
</dbReference>
<dbReference type="InterPro" id="IPR001456">
    <property type="entry name" value="HC-pro"/>
</dbReference>
<dbReference type="InterPro" id="IPR031159">
    <property type="entry name" value="HC_PRO_CPD_dom"/>
</dbReference>
<dbReference type="InterPro" id="IPR042308">
    <property type="entry name" value="HC_PRO_CPD_sf"/>
</dbReference>
<dbReference type="InterPro" id="IPR014001">
    <property type="entry name" value="Helicase_ATP-bd"/>
</dbReference>
<dbReference type="InterPro" id="IPR001650">
    <property type="entry name" value="Helicase_C-like"/>
</dbReference>
<dbReference type="InterPro" id="IPR027417">
    <property type="entry name" value="P-loop_NTPase"/>
</dbReference>
<dbReference type="InterPro" id="IPR002540">
    <property type="entry name" value="Pept_S30_P1_potyvir"/>
</dbReference>
<dbReference type="InterPro" id="IPR009003">
    <property type="entry name" value="Peptidase_S1_PA"/>
</dbReference>
<dbReference type="InterPro" id="IPR043504">
    <property type="entry name" value="Peptidase_S1_PA_chymotrypsin"/>
</dbReference>
<dbReference type="InterPro" id="IPR001592">
    <property type="entry name" value="Poty_coat"/>
</dbReference>
<dbReference type="InterPro" id="IPR001730">
    <property type="entry name" value="Potyv_NIa-pro_dom"/>
</dbReference>
<dbReference type="InterPro" id="IPR039560">
    <property type="entry name" value="Potyvirid-P3"/>
</dbReference>
<dbReference type="InterPro" id="IPR013648">
    <property type="entry name" value="PP_Potyviridae"/>
</dbReference>
<dbReference type="InterPro" id="IPR043128">
    <property type="entry name" value="Rev_trsase/Diguanyl_cyclase"/>
</dbReference>
<dbReference type="InterPro" id="IPR001205">
    <property type="entry name" value="RNA-dir_pol_C"/>
</dbReference>
<dbReference type="InterPro" id="IPR007094">
    <property type="entry name" value="RNA-dir_pol_PSvirus"/>
</dbReference>
<dbReference type="PANTHER" id="PTHR43519">
    <property type="entry name" value="ATP-DEPENDENT RNA HELICASE HRPB"/>
    <property type="match status" value="1"/>
</dbReference>
<dbReference type="PANTHER" id="PTHR43519:SF1">
    <property type="entry name" value="ATP-DEPENDENT RNA HELICASE HRPB"/>
    <property type="match status" value="1"/>
</dbReference>
<dbReference type="Pfam" id="PF00270">
    <property type="entry name" value="DEAD"/>
    <property type="match status" value="1"/>
</dbReference>
<dbReference type="Pfam" id="PF00271">
    <property type="entry name" value="Helicase_C"/>
    <property type="match status" value="1"/>
</dbReference>
<dbReference type="Pfam" id="PF00863">
    <property type="entry name" value="Peptidase_C4"/>
    <property type="match status" value="1"/>
</dbReference>
<dbReference type="Pfam" id="PF00851">
    <property type="entry name" value="Peptidase_C6"/>
    <property type="match status" value="1"/>
</dbReference>
<dbReference type="Pfam" id="PF01577">
    <property type="entry name" value="Peptidase_S30"/>
    <property type="match status" value="1"/>
</dbReference>
<dbReference type="Pfam" id="PF00767">
    <property type="entry name" value="Poty_coat"/>
    <property type="match status" value="1"/>
</dbReference>
<dbReference type="Pfam" id="PF08440">
    <property type="entry name" value="Poty_PP"/>
    <property type="match status" value="1"/>
</dbReference>
<dbReference type="Pfam" id="PF13608">
    <property type="entry name" value="Potyvirid-P3"/>
    <property type="match status" value="1"/>
</dbReference>
<dbReference type="Pfam" id="PF00680">
    <property type="entry name" value="RdRP_1"/>
    <property type="match status" value="1"/>
</dbReference>
<dbReference type="PRINTS" id="PR00966">
    <property type="entry name" value="NIAPOTYPTASE"/>
</dbReference>
<dbReference type="SMART" id="SM00487">
    <property type="entry name" value="DEXDc"/>
    <property type="match status" value="1"/>
</dbReference>
<dbReference type="SMART" id="SM00490">
    <property type="entry name" value="HELICc"/>
    <property type="match status" value="1"/>
</dbReference>
<dbReference type="SUPFAM" id="SSF56672">
    <property type="entry name" value="DNA/RNA polymerases"/>
    <property type="match status" value="1"/>
</dbReference>
<dbReference type="SUPFAM" id="SSF52540">
    <property type="entry name" value="P-loop containing nucleoside triphosphate hydrolases"/>
    <property type="match status" value="2"/>
</dbReference>
<dbReference type="SUPFAM" id="SSF50494">
    <property type="entry name" value="Trypsin-like serine proteases"/>
    <property type="match status" value="1"/>
</dbReference>
<dbReference type="PROSITE" id="PS51744">
    <property type="entry name" value="HC_PRO_CPD"/>
    <property type="match status" value="1"/>
</dbReference>
<dbReference type="PROSITE" id="PS51192">
    <property type="entry name" value="HELICASE_ATP_BIND_1"/>
    <property type="match status" value="1"/>
</dbReference>
<dbReference type="PROSITE" id="PS51194">
    <property type="entry name" value="HELICASE_CTER"/>
    <property type="match status" value="1"/>
</dbReference>
<dbReference type="PROSITE" id="PS51436">
    <property type="entry name" value="POTYVIRUS_NIA_PRO"/>
    <property type="match status" value="1"/>
</dbReference>
<dbReference type="PROSITE" id="PS51871">
    <property type="entry name" value="PV_P1_PRO"/>
    <property type="match status" value="1"/>
</dbReference>
<dbReference type="PROSITE" id="PS50507">
    <property type="entry name" value="RDRP_SSRNA_POS"/>
    <property type="match status" value="1"/>
</dbReference>
<organism>
    <name type="scientific">Pea seed-borne mosaic virus (strain DPD1)</name>
    <dbReference type="NCBI Taxonomy" id="31736"/>
    <lineage>
        <taxon>Viruses</taxon>
        <taxon>Riboviria</taxon>
        <taxon>Orthornavirae</taxon>
        <taxon>Pisuviricota</taxon>
        <taxon>Stelpaviricetes</taxon>
        <taxon>Patatavirales</taxon>
        <taxon>Potyviridae</taxon>
        <taxon>Potyvirus</taxon>
        <taxon>Potyvirus pisumsemenportati</taxon>
        <taxon>Pea seed-borne mosaic virus</taxon>
    </lineage>
</organism>
<evidence type="ECO:0000250" key="1"/>
<evidence type="ECO:0000250" key="2">
    <source>
        <dbReference type="UniProtKB" id="P04517"/>
    </source>
</evidence>
<evidence type="ECO:0000250" key="3">
    <source>
        <dbReference type="UniProtKB" id="P09814"/>
    </source>
</evidence>
<evidence type="ECO:0000250" key="4">
    <source>
        <dbReference type="UniProtKB" id="P13529"/>
    </source>
</evidence>
<evidence type="ECO:0000250" key="5">
    <source>
        <dbReference type="UniProtKB" id="P18247"/>
    </source>
</evidence>
<evidence type="ECO:0000255" key="6"/>
<evidence type="ECO:0000255" key="7">
    <source>
        <dbReference type="PROSITE-ProRule" id="PRU00539"/>
    </source>
</evidence>
<evidence type="ECO:0000255" key="8">
    <source>
        <dbReference type="PROSITE-ProRule" id="PRU00541"/>
    </source>
</evidence>
<evidence type="ECO:0000255" key="9">
    <source>
        <dbReference type="PROSITE-ProRule" id="PRU00542"/>
    </source>
</evidence>
<evidence type="ECO:0000255" key="10">
    <source>
        <dbReference type="PROSITE-ProRule" id="PRU00766"/>
    </source>
</evidence>
<evidence type="ECO:0000255" key="11">
    <source>
        <dbReference type="PROSITE-ProRule" id="PRU01080"/>
    </source>
</evidence>
<evidence type="ECO:0000255" key="12">
    <source>
        <dbReference type="PROSITE-ProRule" id="PRU01219"/>
    </source>
</evidence>
<evidence type="ECO:0000256" key="13">
    <source>
        <dbReference type="SAM" id="MobiDB-lite"/>
    </source>
</evidence>
<evidence type="ECO:0000269" key="14">
    <source>
    </source>
</evidence>
<evidence type="ECO:0000305" key="15"/>
<evidence type="ECO:0000305" key="16">
    <source>
    </source>
</evidence>
<comment type="function">
    <molecule>Helper component proteinase</molecule>
    <text evidence="2">Required for aphid transmission and also has proteolytic activity. Only cleaves a Gly-Gly dipeptide at its own C-terminus. Interacts with virions and aphid stylets. Acts as a suppressor of RNA-mediated gene silencing, also known as post-transcriptional gene silencing (PTGS), a mechanism of plant viral defense that limits the accumulation of viral RNAs. May have RNA-binding activity.</text>
</comment>
<comment type="function">
    <molecule>Cytoplasmic inclusion protein</molecule>
    <text>Has helicase activity. It may be involved in replication.</text>
</comment>
<comment type="function">
    <molecule>6 kDa protein 1</molecule>
    <text evidence="4">Indispensable for virus replication.</text>
</comment>
<comment type="function">
    <molecule>6 kDa protein 2</molecule>
    <text evidence="3">Indispensable for virus replication.</text>
</comment>
<comment type="function">
    <molecule>Viral genome-linked protein</molecule>
    <text evidence="5">Mediates the cap-independent, EIF4E-dependent translation of viral genomic RNAs (By similarity). Binds to the cap-binding site of host EIF4E and thus interferes with the host EIF4E-dependent mRNA export and translation (By similarity). VPg-RNA directly binds EIF4E and is a template for transcription (By similarity). Also forms trimeric complexes with EIF4E-EIF4G, which are templates for translation (By similarity).</text>
</comment>
<comment type="function">
    <molecule>Nuclear inclusion protein A</molecule>
    <text evidence="2">Has RNA-binding and proteolytic activities.</text>
</comment>
<comment type="function">
    <molecule>Nuclear inclusion protein B</molecule>
    <text>An RNA-dependent RNA polymerase that plays an essential role in the virus replication.</text>
</comment>
<comment type="function">
    <molecule>Capsid protein</molecule>
    <text evidence="2">Involved in aphid transmission, cell-to-cell and systemis movement, encapsidation of the viral RNA and in the regulation of viral RNA amplification.</text>
</comment>
<comment type="catalytic activity">
    <reaction evidence="7">
        <text>RNA(n) + a ribonucleoside 5'-triphosphate = RNA(n+1) + diphosphate</text>
        <dbReference type="Rhea" id="RHEA:21248"/>
        <dbReference type="Rhea" id="RHEA-COMP:14527"/>
        <dbReference type="Rhea" id="RHEA-COMP:17342"/>
        <dbReference type="ChEBI" id="CHEBI:33019"/>
        <dbReference type="ChEBI" id="CHEBI:61557"/>
        <dbReference type="ChEBI" id="CHEBI:140395"/>
        <dbReference type="EC" id="2.7.7.48"/>
    </reaction>
</comment>
<comment type="catalytic activity">
    <reaction evidence="2">
        <text>Hydrolyzes glutaminyl bonds, and activity is further restricted by preferences for the amino acids in P6 - P1' that vary with the species of potyvirus, e.g. Glu-Xaa-Xaa-Tyr-Xaa-Gln-|-(Ser or Gly) for the enzyme from tobacco etch virus. The natural substrate is the viral polyprotein, but other proteins and oligopeptides containing the appropriate consensus sequence are also cleaved.</text>
        <dbReference type="EC" id="3.4.22.44"/>
    </reaction>
</comment>
<comment type="catalytic activity">
    <reaction evidence="2">
        <text>Hydrolyzes a Gly-|-Gly bond at its own C-terminus, commonly in the sequence -Tyr-Xaa-Val-Gly-|-Gly, in the processing of the potyviral polyprotein.</text>
        <dbReference type="EC" id="3.4.22.45"/>
    </reaction>
</comment>
<comment type="subunit">
    <molecule>Viral genome-linked protein</molecule>
    <text evidence="5 16">Interacts with host eIF4E protein (via cap-binding region); this interaction mediates the translation of the VPg-viral RNA conjugates (Probable). Part of a complex that comprises VPg, RNA, host EIF4E and EIF4G; this interaction mediates the translation of the VPg-viral RNA conjugates (By similarity).</text>
</comment>
<comment type="subcellular location">
    <molecule>6 kDa protein 1</molecule>
    <subcellularLocation>
        <location>Host cytoplasmic vesicle</location>
    </subcellularLocation>
    <text evidence="4">Probably colocalizes with 6K2-induced vesicles associated with host chloroplasts.</text>
</comment>
<comment type="subcellular location">
    <molecule>6 kDa protein 2</molecule>
    <subcellularLocation>
        <location evidence="3">Host cytoplasmic vesicle</location>
    </subcellularLocation>
    <text evidence="3">6K-induced vesicles associate with host chloroplasts.</text>
</comment>
<comment type="subcellular location">
    <molecule>Viral genome-linked protein</molecule>
    <subcellularLocation>
        <location evidence="14">Host nucleus</location>
    </subcellularLocation>
    <text evidence="14">Binds to host plant eIF4E proteins in the host nucleus.</text>
</comment>
<comment type="subcellular location">
    <molecule>Capsid protein</molecule>
    <subcellularLocation>
        <location evidence="15">Virion</location>
    </subcellularLocation>
</comment>
<comment type="alternative products">
    <event type="ribosomal frameshifting"/>
    <isoform>
        <id>P29152-1</id>
        <name>Genome polyprotein</name>
        <sequence type="displayed"/>
    </isoform>
    <isoform>
        <id>P0CJ99-1</id>
        <name>P3N-PIPO polyprotein</name>
        <sequence type="external"/>
    </isoform>
</comment>
<comment type="domain">
    <molecule>Helper component proteinase</molecule>
    <text>The N-terminus is involved in interaction with stylets. The central part is involved in interaction with virions and the C-terminus is involved in cell-to cell movement of the virus.</text>
</comment>
<comment type="PTM">
    <molecule>Viral genome-linked protein</molecule>
    <text evidence="3">VPg is uridylylated by the polymerase and is covalently attached to the 5'-end of the genomic RNA. This uridylylated form acts as a nucleotide-peptide primer for the polymerase (By similarity).</text>
</comment>
<comment type="PTM">
    <molecule>Genome polyprotein</molecule>
    <text evidence="1">Potyviral RNA is expressed as two polyproteins which undergo post-translational proteolytic processing. Genome polyprotein is processed by NIa-pro, P1 and HC-pro proteinases resulting in the production of at least ten individual proteins. P3N-PIPO polyprotein is cleaved by P1 and HC-pro proteinases resulting in the production of three individual proteins. The P1 proteinase and the HC-pro cleave only their respective C-termini autocatalytically. 6K1 is essential for proper proteolytic separation of P3 from CI (By similarity).</text>
</comment>
<comment type="miscellaneous">
    <molecule>Isoform Genome polyprotein</molecule>
    <text>Produced by conventional translation.</text>
</comment>
<comment type="similarity">
    <text evidence="15">Belongs to the potyviridae genome polyprotein family.</text>
</comment>
<protein>
    <recommendedName>
        <fullName>Genome polyprotein</fullName>
    </recommendedName>
    <component>
        <recommendedName>
            <fullName>P1 proteinase</fullName>
            <ecNumber evidence="2">3.4.-.-</ecNumber>
        </recommendedName>
        <alternativeName>
            <fullName>N-terminal protein</fullName>
        </alternativeName>
    </component>
    <component>
        <recommendedName>
            <fullName>Helper component proteinase</fullName>
            <shortName>HC-pro</shortName>
            <ecNumber evidence="2">3.4.22.45</ecNumber>
        </recommendedName>
    </component>
    <component>
        <recommendedName>
            <fullName>Protein P3</fullName>
        </recommendedName>
    </component>
    <component>
        <recommendedName>
            <fullName>6 kDa protein 1</fullName>
            <shortName>6K1</shortName>
        </recommendedName>
    </component>
    <component>
        <recommendedName>
            <fullName>Cytoplasmic inclusion protein</fullName>
            <shortName>CI</shortName>
            <ecNumber>3.6.4.-</ecNumber>
        </recommendedName>
    </component>
    <component>
        <recommendedName>
            <fullName>6 kDa protein 2</fullName>
            <shortName>6K2</shortName>
        </recommendedName>
    </component>
    <component>
        <recommendedName>
            <fullName>Viral genome-linked protein</fullName>
        </recommendedName>
        <alternativeName>
            <fullName>VPg</fullName>
        </alternativeName>
    </component>
    <component>
        <recommendedName>
            <fullName>Nuclear inclusion protein A</fullName>
            <shortName>NI-a</shortName>
            <shortName>NIa</shortName>
            <ecNumber>3.4.22.44</ecNumber>
        </recommendedName>
        <alternativeName>
            <fullName>49 kDa proteinase</fullName>
            <shortName>49 kDa-Pro</shortName>
        </alternativeName>
        <alternativeName>
            <fullName>NIa-pro</fullName>
        </alternativeName>
    </component>
    <component>
        <recommendedName>
            <fullName>Nuclear inclusion protein B</fullName>
            <shortName>NI-b</shortName>
            <shortName>NIb</shortName>
            <ecNumber>2.7.7.48</ecNumber>
        </recommendedName>
        <alternativeName>
            <fullName>RNA-directed RNA polymerase</fullName>
        </alternativeName>
    </component>
    <component>
        <recommendedName>
            <fullName>Capsid protein</fullName>
            <shortName>CP</shortName>
        </recommendedName>
        <alternativeName>
            <fullName>Coat protein</fullName>
        </alternativeName>
    </component>
</protein>
<proteinExistence type="evidence at protein level"/>
<keyword id="KW-0067">ATP-binding</keyword>
<keyword id="KW-0167">Capsid protein</keyword>
<keyword id="KW-0191">Covalent protein-RNA linkage</keyword>
<keyword id="KW-1139">Helical capsid protein</keyword>
<keyword id="KW-0347">Helicase</keyword>
<keyword id="KW-1036">Host cytoplasmic vesicle</keyword>
<keyword id="KW-1048">Host nucleus</keyword>
<keyword id="KW-0945">Host-virus interaction</keyword>
<keyword id="KW-0378">Hydrolase</keyword>
<keyword id="KW-1090">Inhibition of host innate immune response by virus</keyword>
<keyword id="KW-0547">Nucleotide-binding</keyword>
<keyword id="KW-0548">Nucleotidyltransferase</keyword>
<keyword id="KW-0597">Phosphoprotein</keyword>
<keyword id="KW-0645">Protease</keyword>
<keyword id="KW-0688">Ribosomal frameshifting</keyword>
<keyword id="KW-0696">RNA-directed RNA polymerase</keyword>
<keyword id="KW-0720">Serine protease</keyword>
<keyword id="KW-0941">Suppressor of RNA silencing</keyword>
<keyword id="KW-0788">Thiol protease</keyword>
<keyword id="KW-0808">Transferase</keyword>
<keyword id="KW-0899">Viral immunoevasion</keyword>
<keyword id="KW-0693">Viral RNA replication</keyword>
<keyword id="KW-0946">Virion</keyword>
<sequence length="3206" mass="364276">MSTLVCQAVAAPVWSNGARTRRIRDADGEYRCTQCDMGFDSMTMARPVNHCCDGIMIDEYNLYDDDPIMHLVDSKTPIKRGSQETEGDGMAAEAIKVTGAEPVNCFMVGTIKCKINENSIVAKGVMAAIPRQLTQDEVFMRKARLQAAVAKSTIEREEKERQFAFSKLEEKLRARREKLKDGIVIKTRKGLEWREATPNQQRGKLQSTSFDASGGKTLTPHTIYCKTKSSKFSNGGVKCATSKKMRTVRKPQSLKMKTESIDVLIEQVMTIAGKHAKQVTLIDKQKTNRVWIRRVNGVRLLQVETKHHKGIISQKDASLNNLTKRVARHFARKTAYIHPSDSITHGHSGVVFLRANISGSKSYSIDDLFVVRGKRNGKLMESRNKVAWRKMFQIDHFSIVGIKIWNAFDAEYVKLRDESVSDHDCVGGITPEECGILAAQILRVFYPCWRITCTKCISNWLSKPTSEQIEHIYERGNLAIQDLNKRIPSAHHVTQMVELLRQRIKNTTFDMGNNTKVHELIGHRQDGVFRHLNRLNNSILAANGSSTIEWESMNESLLELARWHNKRTESIASGGISSFRNKISAKAQINFALMCDNQLDTNGNFVWGERGYHAKRFFSEFFTKIDPKDGYSHHTVRATPTGVRHLAIGNLIIPGDLQKLREKLEGVSITAVGISEKCVSRRNGDFVYPCSCVTSENGKPVLSDVILPTRNHLVIGNTGDPKLVDLPKTETGRMWIAKEGYCYINIFFAMLVNVSEKDAKDFTKFVRDEIMPQLGKWPTMMDVATACYKLAIIYPDVRDAQLPRILVDHSEQIFHVIDSYGSMTTGYHILKAGTVSQLISFAHGALLGEMKMYRVGGTQKMEINMCCCQRKNLLIKQLIRAIYRPKLLTEIIETEPFVLMLAIVSPSILKAMFRSGTFNQAIKFYMHRSKPTAQTLAFLEALSERVSRSRVLSEQFNIIDGALKELKSLANMSMRTQHTYPIVQNQLDIMIERVSADAELLRDGFVVSKGRVQALIEKNYQDDLRNSFTDLPYVQQLQQTMSFSRVKHGFGELCESKDLSFSKEAWMGHLSSFSAGGKQIIRLARTKSQQMLASGGRRVTLAARNITMRMVTATFSEIMKFVNMLLVLSMIFKLWKQANTLLEEREKDKWEKFDRSQNELRRQLRYTLWRFEAQEGRQVTREEFFDYLKYNEGIENRHELINELIANQPLFSIQAKKHGEIRFEQTVALMALLAMMFGSDRSDAVFSTLSKVRTIFTTMAQEVRCQSIDDIHDVFDEKKATIDFELATDQPAQVQMDKTFCEWWQNQMEQNRTVPHYRTGGKFIEFTRSNAASVANEIAHTPDFSEYLIRGAVGSGKSTGLPCYLSAKGRVLLLEPTRPLTENVCAQLRGSPFHKSPSMSMRNGHTFGSTPIHVMTTGYALHFFCNNVERIREYDFVIFDECHVIDSSAMSFYCALKEYSYQGKILKVSATPPGREVEFKTQFPVTIATEDSLSFDQFVQAQGSGANCDILKKGHNILVYVSSYNEVDRLSKLLVDRGFKVTKVDGRTMKLGGVEINTSGTAEKPHFIVATNIIENGVTLDIDVVVDFGVKVVAELDADARTMRYNKQAISYGERIQRLGRVGRLKDGHALRIGHTEKGITEIPVAIAVESAFQCFAYGLPVMTSNVSTSIIGNCTVKQARTMMNFELSPFFTVELVKYNGTMHPEIHKILVPYKLRDSSMQLCKEAIPNSGVSRWHTAHEYISHGIVLETLKSDVRIPFYLKGVPEKVYEKIWNAVCVFKSDSGFGRMSTASACNVAYTLKTDPLSITRTIAHIDALLIEEQEKKSQFDLMSSHVTNSSSISLAGLVNRLRSKWMVDHSGENIVKLQNARSQLLEFRGMDINLDDVESFRKFGCAETVRCQSKSEVSKTLQLKGKWNKPLITSDFFVVCMVSIGCVVLMYQIFMAKWNEPVKLEGKSKAKTLRFRQARDNNAKYEVFADEDTKRHYFGEAYTKKGKKSGKARGMGVKTKKFVNVYGFDPCEYSLVRFVDPLTGLTYDRHPMEHMMDVQETIGDDRREAMWNDELDKQLFVTRPTIEAYYIKDKTTPALKIDLNPHNPMRVCDKAETIAGFPEREFELRQSGSATLVPYSEVPVQNEKQEFDEEHVRTEAASLHFGLRDYNPIAQAVCRITNTGVDYDRSIFGIGFGQFLITNAHCFKLNEGETRIVSRHGQFTIEKTHSLPIHQVKDKDMVIVRLPKDFPPFPQRLQFRAPQEREKICLVGSNFQEKSIQSVITESCMTFKHNGGKYWKHWITTKEGHCGLPAVALKDGHIVGIHNLGGENTNINYFTPFDADILDKYLLNAEALQWTKGWKYNKNKVCWGGLELLDDNEPEESGLFRMVKLLKSLEEDGVRTQSRDDAWLEKEIKGSLKVVARCPGQLVTKHVVKGPCAMFQLYLELHEDAKSFFTPRMGSYGKSRLSKGAFIKDIMKYSSNTVVGNVDCDVFENAIDNVEKILWKAGMMQCEYVTDAEAIFQSLNMNAAVGAMYQGKKKDYFEDFTAADRELIVKQSCERLFLGKKGVWNGSLKAELRPIEKVHENKTRTFTAAPLDTLLGGKVCVDDFNNFFYSCHLRGPWTVGITKFYAGWNEFLSKLPDGWLYCDADGSRFDSSLTPYLINAVLELRLRFMEEWDAGEQMLKNLYTEIIYTPIATPDGSVIKKTKGNNSGQPSTVVDNTLMVILAMQYSLQLLGVDFETQDEVVRYFANGDDLLIAVRPDCEFVLKGLEIHFSNLGLNYNFSARHHDKKDVWFMSTRGILRDGILIPKLEEERIVAILEWDRSREFSHRLDAICAAMIEAWGYDELLQHIRKFYYWLLEQEPYRSIAQEGKAPYIAETALRHLYTNAMATQSELEKYTEAINQHYNDEGGDGSIKVRLQAGDETKDDERRRKEEEDRKKREESIDASQFGSNRDNKKNKNKESDTPNKLIVKSDRDVDAGSSGTITVPRLEKISAKIRMPKHKGGVAISLQHLVDYNPAQVDISNTRATQSQFDNWWRAVSQEYGVGDNEMQVLASGLMVWCIENGTSPNINGMWTMMDGEEQVEYPLKPVMDNARPTFRQIMAHFSDVAEAYIEKRNSTEVYIPRYALQRNLRDPSLARYGFDFYEITAKTPVRAREAHFQMKAAAIRGKSNSLFGLDGNVGTQEENTERHTAEDVNQNMHNLLGMRAM</sequence>
<accession>P29152</accession>